<organism>
    <name type="scientific">Staphylococcus aureus (strain NCTC 8325 / PS 47)</name>
    <dbReference type="NCBI Taxonomy" id="93061"/>
    <lineage>
        <taxon>Bacteria</taxon>
        <taxon>Bacillati</taxon>
        <taxon>Bacillota</taxon>
        <taxon>Bacilli</taxon>
        <taxon>Bacillales</taxon>
        <taxon>Staphylococcaceae</taxon>
        <taxon>Staphylococcus</taxon>
    </lineage>
</organism>
<evidence type="ECO:0000255" key="1">
    <source>
        <dbReference type="HAMAP-Rule" id="MF_00149"/>
    </source>
</evidence>
<evidence type="ECO:0000256" key="2">
    <source>
        <dbReference type="SAM" id="MobiDB-lite"/>
    </source>
</evidence>
<evidence type="ECO:0000305" key="3"/>
<feature type="chain" id="PRO_0000177973" description="DNA mismatch repair protein MutL">
    <location>
        <begin position="1"/>
        <end position="669"/>
    </location>
</feature>
<feature type="region of interest" description="Disordered" evidence="2">
    <location>
        <begin position="356"/>
        <end position="382"/>
    </location>
</feature>
<feature type="compositionally biased region" description="Polar residues" evidence="2">
    <location>
        <begin position="361"/>
        <end position="378"/>
    </location>
</feature>
<feature type="sequence conflict" description="In Ref. 1; AAK56306." evidence="3" ref="1">
    <original>Q</original>
    <variation>R</variation>
    <location>
        <position position="385"/>
    </location>
</feature>
<feature type="sequence conflict" description="In Ref. 1; AAK56306." evidence="3" ref="1">
    <original>N</original>
    <variation>D</variation>
    <location>
        <position position="417"/>
    </location>
</feature>
<keyword id="KW-0227">DNA damage</keyword>
<keyword id="KW-0234">DNA repair</keyword>
<keyword id="KW-1185">Reference proteome</keyword>
<accession>Q93T05</accession>
<accession>Q2FYZ8</accession>
<gene>
    <name evidence="1" type="primary">mutL</name>
    <name type="ordered locus">SAOUHSC_01273</name>
</gene>
<proteinExistence type="inferred from homology"/>
<reference key="1">
    <citation type="journal article" date="2002" name="J. Antimicrob. Chemother.">
        <title>Insertional inactivation of mutS in Staphylococcus aureus reveals potential for elevated mutation frequencies, although the prevalence of mutators in clinical isolates is low.</title>
        <authorList>
            <person name="O'Neill A.J."/>
            <person name="Chopra I."/>
        </authorList>
    </citation>
    <scope>NUCLEOTIDE SEQUENCE [GENOMIC DNA]</scope>
</reference>
<reference key="2">
    <citation type="book" date="2006" name="Gram positive pathogens, 2nd edition">
        <title>The Staphylococcus aureus NCTC 8325 genome.</title>
        <editorList>
            <person name="Fischetti V."/>
            <person name="Novick R."/>
            <person name="Ferretti J."/>
            <person name="Portnoy D."/>
            <person name="Rood J."/>
        </editorList>
        <authorList>
            <person name="Gillaspy A.F."/>
            <person name="Worrell V."/>
            <person name="Orvis J."/>
            <person name="Roe B.A."/>
            <person name="Dyer D.W."/>
            <person name="Iandolo J.J."/>
        </authorList>
    </citation>
    <scope>NUCLEOTIDE SEQUENCE [LARGE SCALE GENOMIC DNA]</scope>
    <source>
        <strain>NCTC 8325 / PS 47</strain>
    </source>
</reference>
<protein>
    <recommendedName>
        <fullName evidence="1">DNA mismatch repair protein MutL</fullName>
    </recommendedName>
</protein>
<name>MUTL_STAA8</name>
<dbReference type="EMBL" id="AF378369">
    <property type="protein sequence ID" value="AAK56306.1"/>
    <property type="molecule type" value="Genomic_DNA"/>
</dbReference>
<dbReference type="EMBL" id="CP000253">
    <property type="protein sequence ID" value="ABD30374.1"/>
    <property type="molecule type" value="Genomic_DNA"/>
</dbReference>
<dbReference type="RefSeq" id="WP_000516261.1">
    <property type="nucleotide sequence ID" value="NZ_LS483365.1"/>
</dbReference>
<dbReference type="RefSeq" id="YP_499806.1">
    <property type="nucleotide sequence ID" value="NC_007795.1"/>
</dbReference>
<dbReference type="SMR" id="Q93T05"/>
<dbReference type="STRING" id="93061.SAOUHSC_01273"/>
<dbReference type="PaxDb" id="1280-SAXN108_1301"/>
<dbReference type="GeneID" id="3919926"/>
<dbReference type="KEGG" id="sao:SAOUHSC_01273"/>
<dbReference type="PATRIC" id="fig|93061.5.peg.1167"/>
<dbReference type="eggNOG" id="COG0323">
    <property type="taxonomic scope" value="Bacteria"/>
</dbReference>
<dbReference type="HOGENOM" id="CLU_004131_4_1_9"/>
<dbReference type="OrthoDB" id="9763467at2"/>
<dbReference type="PRO" id="PR:Q93T05"/>
<dbReference type="Proteomes" id="UP000008816">
    <property type="component" value="Chromosome"/>
</dbReference>
<dbReference type="GO" id="GO:0032300">
    <property type="term" value="C:mismatch repair complex"/>
    <property type="evidence" value="ECO:0000318"/>
    <property type="project" value="GO_Central"/>
</dbReference>
<dbReference type="GO" id="GO:0005524">
    <property type="term" value="F:ATP binding"/>
    <property type="evidence" value="ECO:0007669"/>
    <property type="project" value="InterPro"/>
</dbReference>
<dbReference type="GO" id="GO:0016887">
    <property type="term" value="F:ATP hydrolysis activity"/>
    <property type="evidence" value="ECO:0000318"/>
    <property type="project" value="GO_Central"/>
</dbReference>
<dbReference type="GO" id="GO:0140664">
    <property type="term" value="F:ATP-dependent DNA damage sensor activity"/>
    <property type="evidence" value="ECO:0007669"/>
    <property type="project" value="InterPro"/>
</dbReference>
<dbReference type="GO" id="GO:0030983">
    <property type="term" value="F:mismatched DNA binding"/>
    <property type="evidence" value="ECO:0007669"/>
    <property type="project" value="InterPro"/>
</dbReference>
<dbReference type="GO" id="GO:0006298">
    <property type="term" value="P:mismatch repair"/>
    <property type="evidence" value="ECO:0000318"/>
    <property type="project" value="GO_Central"/>
</dbReference>
<dbReference type="CDD" id="cd16926">
    <property type="entry name" value="HATPase_MutL-MLH-PMS-like"/>
    <property type="match status" value="1"/>
</dbReference>
<dbReference type="CDD" id="cd00782">
    <property type="entry name" value="MutL_Trans"/>
    <property type="match status" value="1"/>
</dbReference>
<dbReference type="FunFam" id="3.30.1370.100:FF:000004">
    <property type="entry name" value="DNA mismatch repair endonuclease MutL"/>
    <property type="match status" value="1"/>
</dbReference>
<dbReference type="FunFam" id="3.30.230.10:FF:000036">
    <property type="entry name" value="DNA mismatch repair endonuclease MutL"/>
    <property type="match status" value="1"/>
</dbReference>
<dbReference type="FunFam" id="3.30.565.10:FF:000003">
    <property type="entry name" value="DNA mismatch repair endonuclease MutL"/>
    <property type="match status" value="1"/>
</dbReference>
<dbReference type="Gene3D" id="3.30.230.10">
    <property type="match status" value="1"/>
</dbReference>
<dbReference type="Gene3D" id="3.30.565.10">
    <property type="entry name" value="Histidine kinase-like ATPase, C-terminal domain"/>
    <property type="match status" value="1"/>
</dbReference>
<dbReference type="Gene3D" id="3.30.1540.20">
    <property type="entry name" value="MutL, C-terminal domain, dimerisation subdomain"/>
    <property type="match status" value="1"/>
</dbReference>
<dbReference type="Gene3D" id="3.30.1370.100">
    <property type="entry name" value="MutL, C-terminal domain, regulatory subdomain"/>
    <property type="match status" value="1"/>
</dbReference>
<dbReference type="HAMAP" id="MF_00149">
    <property type="entry name" value="DNA_mis_repair"/>
    <property type="match status" value="1"/>
</dbReference>
<dbReference type="InterPro" id="IPR014762">
    <property type="entry name" value="DNA_mismatch_repair_CS"/>
</dbReference>
<dbReference type="InterPro" id="IPR020667">
    <property type="entry name" value="DNA_mismatch_repair_MutL"/>
</dbReference>
<dbReference type="InterPro" id="IPR013507">
    <property type="entry name" value="DNA_mismatch_S5_2-like"/>
</dbReference>
<dbReference type="InterPro" id="IPR036890">
    <property type="entry name" value="HATPase_C_sf"/>
</dbReference>
<dbReference type="InterPro" id="IPR002099">
    <property type="entry name" value="MutL/Mlh/PMS"/>
</dbReference>
<dbReference type="InterPro" id="IPR038973">
    <property type="entry name" value="MutL/Mlh/Pms-like"/>
</dbReference>
<dbReference type="InterPro" id="IPR014790">
    <property type="entry name" value="MutL_C"/>
</dbReference>
<dbReference type="InterPro" id="IPR042120">
    <property type="entry name" value="MutL_C_dimsub"/>
</dbReference>
<dbReference type="InterPro" id="IPR042121">
    <property type="entry name" value="MutL_C_regsub"/>
</dbReference>
<dbReference type="InterPro" id="IPR037198">
    <property type="entry name" value="MutL_C_sf"/>
</dbReference>
<dbReference type="InterPro" id="IPR020568">
    <property type="entry name" value="Ribosomal_Su5_D2-typ_SF"/>
</dbReference>
<dbReference type="InterPro" id="IPR014721">
    <property type="entry name" value="Ribsml_uS5_D2-typ_fold_subgr"/>
</dbReference>
<dbReference type="NCBIfam" id="TIGR00585">
    <property type="entry name" value="mutl"/>
    <property type="match status" value="1"/>
</dbReference>
<dbReference type="NCBIfam" id="NF000950">
    <property type="entry name" value="PRK00095.1-3"/>
    <property type="match status" value="1"/>
</dbReference>
<dbReference type="PANTHER" id="PTHR10073">
    <property type="entry name" value="DNA MISMATCH REPAIR PROTEIN MLH, PMS, MUTL"/>
    <property type="match status" value="1"/>
</dbReference>
<dbReference type="PANTHER" id="PTHR10073:SF12">
    <property type="entry name" value="DNA MISMATCH REPAIR PROTEIN MLH1"/>
    <property type="match status" value="1"/>
</dbReference>
<dbReference type="Pfam" id="PF01119">
    <property type="entry name" value="DNA_mis_repair"/>
    <property type="match status" value="1"/>
</dbReference>
<dbReference type="Pfam" id="PF13589">
    <property type="entry name" value="HATPase_c_3"/>
    <property type="match status" value="1"/>
</dbReference>
<dbReference type="Pfam" id="PF08676">
    <property type="entry name" value="MutL_C"/>
    <property type="match status" value="1"/>
</dbReference>
<dbReference type="SMART" id="SM01340">
    <property type="entry name" value="DNA_mis_repair"/>
    <property type="match status" value="1"/>
</dbReference>
<dbReference type="SMART" id="SM00853">
    <property type="entry name" value="MutL_C"/>
    <property type="match status" value="1"/>
</dbReference>
<dbReference type="SUPFAM" id="SSF55874">
    <property type="entry name" value="ATPase domain of HSP90 chaperone/DNA topoisomerase II/histidine kinase"/>
    <property type="match status" value="1"/>
</dbReference>
<dbReference type="SUPFAM" id="SSF118116">
    <property type="entry name" value="DNA mismatch repair protein MutL"/>
    <property type="match status" value="1"/>
</dbReference>
<dbReference type="SUPFAM" id="SSF54211">
    <property type="entry name" value="Ribosomal protein S5 domain 2-like"/>
    <property type="match status" value="1"/>
</dbReference>
<dbReference type="PROSITE" id="PS00058">
    <property type="entry name" value="DNA_MISMATCH_REPAIR_1"/>
    <property type="match status" value="1"/>
</dbReference>
<sequence>MGKIKELQTSLANKIAAGEVVERPSSVVKELLENAIDAGATEISIEVEESGVQSIRVVDNGSGIEAEDLGLVFHRHATSKLDQDEDLFHIRTLGFRGEALASISSVAKVTLKTCTDNANGNEIYVENGEILNHKPAKAKKGTDILVESLFYNTPARLKYIKSLYTELGKITDIVNRMAMSHPDIRIALISDGKTMLSTNGSGRTNEVMAEIYGMKVARDLVHISGDTSDYHIEGFVAKPEHSRSNKHYISIFINGRYIKNFMLNKAILEGYHTLLTIGRFPICYINIEMDPILVDVNVHPTKLEVRLSKEEQLYQLIVSKIQEAFKDRILIPKNNLDYVPKKNKVLHSFEQQKIEFEQRQNTENNQEKTFSSEESNSKPFMEENQNDEIVIKEDSYNPFVTKTSESLIADDESSGYNNTREKDEDYFKKQQEILQEMDQTFDSNDGTTVQNYENKASDDYYDVNDIKGTKSKDPKRRIPYMEIVGQVHGTYIIAQNEFGMYMIDQHAAQERIKYEYFRDKIGEVTNEVQDLLIPLTFHFSKDEQLVIDQYKNELQQVGIMLEHFGGHDYIVSSYPVWFPKDEVEEIIKDMIELILEEKKVDIKKLREDVAIMMSCKKSIKANHYLQKHEMSDLIDQLREAEDPFTCPHGRPIIINFSKYELEKLFKRVM</sequence>
<comment type="function">
    <text evidence="1">This protein is involved in the repair of mismatches in DNA. It is required for dam-dependent methyl-directed DNA mismatch repair. May act as a 'molecular matchmaker', a protein that promotes the formation of a stable complex between two or more DNA-binding proteins in an ATP-dependent manner without itself being part of a final effector complex.</text>
</comment>
<comment type="similarity">
    <text evidence="1">Belongs to the DNA mismatch repair MutL/HexB family.</text>
</comment>